<organism>
    <name type="scientific">Oryza sativa subsp. japonica</name>
    <name type="common">Rice</name>
    <dbReference type="NCBI Taxonomy" id="39947"/>
    <lineage>
        <taxon>Eukaryota</taxon>
        <taxon>Viridiplantae</taxon>
        <taxon>Streptophyta</taxon>
        <taxon>Embryophyta</taxon>
        <taxon>Tracheophyta</taxon>
        <taxon>Spermatophyta</taxon>
        <taxon>Magnoliopsida</taxon>
        <taxon>Liliopsida</taxon>
        <taxon>Poales</taxon>
        <taxon>Poaceae</taxon>
        <taxon>BOP clade</taxon>
        <taxon>Oryzoideae</taxon>
        <taxon>Oryzeae</taxon>
        <taxon>Oryzinae</taxon>
        <taxon>Oryza</taxon>
        <taxon>Oryza sativa</taxon>
    </lineage>
</organism>
<proteinExistence type="evidence at protein level"/>
<reference key="1">
    <citation type="journal article" date="1997" name="Mol. Cells">
        <title>Characterization of two rice MADS box genes that control flowering time.</title>
        <authorList>
            <person name="Kang H.-G."/>
            <person name="Jang S."/>
            <person name="Chung J.E."/>
            <person name="Cho Y.-G."/>
            <person name="An G."/>
        </authorList>
    </citation>
    <scope>NUCLEOTIDE SEQUENCE [MRNA]</scope>
    <scope>FUNCTION</scope>
    <scope>TISSUE SPECIFICITY</scope>
    <source>
        <strain>cv. M201</strain>
    </source>
</reference>
<reference key="2">
    <citation type="journal article" date="2005" name="Nature">
        <title>The map-based sequence of the rice genome.</title>
        <authorList>
            <consortium name="International rice genome sequencing project (IRGSP)"/>
        </authorList>
    </citation>
    <scope>NUCLEOTIDE SEQUENCE [LARGE SCALE GENOMIC DNA]</scope>
    <source>
        <strain>cv. Nipponbare</strain>
    </source>
</reference>
<reference key="3">
    <citation type="journal article" date="2008" name="Nucleic Acids Res.">
        <title>The rice annotation project database (RAP-DB): 2008 update.</title>
        <authorList>
            <consortium name="The rice annotation project (RAP)"/>
        </authorList>
    </citation>
    <scope>GENOME REANNOTATION</scope>
    <source>
        <strain>cv. Nipponbare</strain>
    </source>
</reference>
<reference key="4">
    <citation type="journal article" date="2013" name="Rice">
        <title>Improvement of the Oryza sativa Nipponbare reference genome using next generation sequence and optical map data.</title>
        <authorList>
            <person name="Kawahara Y."/>
            <person name="de la Bastide M."/>
            <person name="Hamilton J.P."/>
            <person name="Kanamori H."/>
            <person name="McCombie W.R."/>
            <person name="Ouyang S."/>
            <person name="Schwartz D.C."/>
            <person name="Tanaka T."/>
            <person name="Wu J."/>
            <person name="Zhou S."/>
            <person name="Childs K.L."/>
            <person name="Davidson R.M."/>
            <person name="Lin H."/>
            <person name="Quesada-Ocampo L."/>
            <person name="Vaillancourt B."/>
            <person name="Sakai H."/>
            <person name="Lee S.S."/>
            <person name="Kim J."/>
            <person name="Numa H."/>
            <person name="Itoh T."/>
            <person name="Buell C.R."/>
            <person name="Matsumoto T."/>
        </authorList>
    </citation>
    <scope>GENOME REANNOTATION</scope>
    <source>
        <strain>cv. Nipponbare</strain>
    </source>
</reference>
<reference key="5">
    <citation type="journal article" date="2005" name="PLoS Biol.">
        <title>The genomes of Oryza sativa: a history of duplications.</title>
        <authorList>
            <person name="Yu J."/>
            <person name="Wang J."/>
            <person name="Lin W."/>
            <person name="Li S."/>
            <person name="Li H."/>
            <person name="Zhou J."/>
            <person name="Ni P."/>
            <person name="Dong W."/>
            <person name="Hu S."/>
            <person name="Zeng C."/>
            <person name="Zhang J."/>
            <person name="Zhang Y."/>
            <person name="Li R."/>
            <person name="Xu Z."/>
            <person name="Li S."/>
            <person name="Li X."/>
            <person name="Zheng H."/>
            <person name="Cong L."/>
            <person name="Lin L."/>
            <person name="Yin J."/>
            <person name="Geng J."/>
            <person name="Li G."/>
            <person name="Shi J."/>
            <person name="Liu J."/>
            <person name="Lv H."/>
            <person name="Li J."/>
            <person name="Wang J."/>
            <person name="Deng Y."/>
            <person name="Ran L."/>
            <person name="Shi X."/>
            <person name="Wang X."/>
            <person name="Wu Q."/>
            <person name="Li C."/>
            <person name="Ren X."/>
            <person name="Wang J."/>
            <person name="Wang X."/>
            <person name="Li D."/>
            <person name="Liu D."/>
            <person name="Zhang X."/>
            <person name="Ji Z."/>
            <person name="Zhao W."/>
            <person name="Sun Y."/>
            <person name="Zhang Z."/>
            <person name="Bao J."/>
            <person name="Han Y."/>
            <person name="Dong L."/>
            <person name="Ji J."/>
            <person name="Chen P."/>
            <person name="Wu S."/>
            <person name="Liu J."/>
            <person name="Xiao Y."/>
            <person name="Bu D."/>
            <person name="Tan J."/>
            <person name="Yang L."/>
            <person name="Ye C."/>
            <person name="Zhang J."/>
            <person name="Xu J."/>
            <person name="Zhou Y."/>
            <person name="Yu Y."/>
            <person name="Zhang B."/>
            <person name="Zhuang S."/>
            <person name="Wei H."/>
            <person name="Liu B."/>
            <person name="Lei M."/>
            <person name="Yu H."/>
            <person name="Li Y."/>
            <person name="Xu H."/>
            <person name="Wei S."/>
            <person name="He X."/>
            <person name="Fang L."/>
            <person name="Zhang Z."/>
            <person name="Zhang Y."/>
            <person name="Huang X."/>
            <person name="Su Z."/>
            <person name="Tong W."/>
            <person name="Li J."/>
            <person name="Tong Z."/>
            <person name="Li S."/>
            <person name="Ye J."/>
            <person name="Wang L."/>
            <person name="Fang L."/>
            <person name="Lei T."/>
            <person name="Chen C.-S."/>
            <person name="Chen H.-C."/>
            <person name="Xu Z."/>
            <person name="Li H."/>
            <person name="Huang H."/>
            <person name="Zhang F."/>
            <person name="Xu H."/>
            <person name="Li N."/>
            <person name="Zhao C."/>
            <person name="Li S."/>
            <person name="Dong L."/>
            <person name="Huang Y."/>
            <person name="Li L."/>
            <person name="Xi Y."/>
            <person name="Qi Q."/>
            <person name="Li W."/>
            <person name="Zhang B."/>
            <person name="Hu W."/>
            <person name="Zhang Y."/>
            <person name="Tian X."/>
            <person name="Jiao Y."/>
            <person name="Liang X."/>
            <person name="Jin J."/>
            <person name="Gao L."/>
            <person name="Zheng W."/>
            <person name="Hao B."/>
            <person name="Liu S.-M."/>
            <person name="Wang W."/>
            <person name="Yuan L."/>
            <person name="Cao M."/>
            <person name="McDermott J."/>
            <person name="Samudrala R."/>
            <person name="Wang J."/>
            <person name="Wong G.K.-S."/>
            <person name="Yang H."/>
        </authorList>
    </citation>
    <scope>NUCLEOTIDE SEQUENCE [LARGE SCALE GENOMIC DNA]</scope>
    <source>
        <strain>cv. Nipponbare</strain>
    </source>
</reference>
<reference key="6">
    <citation type="journal article" date="2003" name="Science">
        <title>Collection, mapping, and annotation of over 28,000 cDNA clones from japonica rice.</title>
        <authorList>
            <consortium name="The rice full-length cDNA consortium"/>
        </authorList>
    </citation>
    <scope>NUCLEOTIDE SEQUENCE [LARGE SCALE MRNA]</scope>
    <source>
        <strain>cv. Nipponbare</strain>
    </source>
</reference>
<reference key="7">
    <citation type="journal article" date="1997" name="Mol. Gen. Genet.">
        <title>MADS box genes expressed in developing inflorescences of rice and sorghum.</title>
        <authorList>
            <person name="Greco R."/>
            <person name="Stagi L."/>
            <person name="Colombo L."/>
            <person name="Angenent G.C."/>
            <person name="Sari-Gorla M."/>
            <person name="Pe M.E."/>
        </authorList>
    </citation>
    <scope>NUCLEOTIDE SEQUENCE [MRNA] OF 12-248</scope>
    <scope>TISSUE SPECIFICITY</scope>
    <scope>DEVELOPMENTAL STAGE</scope>
</reference>
<reference key="8">
    <citation type="journal article" date="1999" name="Plant Physiol.">
        <title>Determination of the motif responsible for interaction between the rice APETALA1/AGAMOUS-LIKE9 family proteins using a yeast two-hybrid system.</title>
        <authorList>
            <person name="Moon Y.-H."/>
            <person name="Kang H.-G."/>
            <person name="Jung J.-Y."/>
            <person name="Jeon J.-S."/>
            <person name="Sung S.-K."/>
            <person name="An G."/>
        </authorList>
    </citation>
    <scope>INTERACTION WITH MADS6</scope>
</reference>
<reference key="9">
    <citation type="journal article" date="2000" name="Mol. Breed.">
        <title>Production of transgenic rice plants showing reduced heading date and plant height by ectopic expression of rice MADS-box genes.</title>
        <authorList>
            <person name="Jeon J.-S."/>
            <person name="Lee S."/>
            <person name="Nam J."/>
            <person name="Jung K.-H."/>
            <person name="Yang W.-S."/>
            <person name="Yi G.-H."/>
            <person name="Oh B.-G."/>
            <person name="An G."/>
        </authorList>
        <dbReference type="AGRICOLA" id="IND22436162"/>
    </citation>
    <scope>FUNCTION</scope>
</reference>
<reference key="10">
    <citation type="journal article" date="2002" name="Mol. Genet. Genomics">
        <title>Ovule-specific MADS-box proteins have conserved protein-protein interactions in monocot and dicot plants.</title>
        <authorList>
            <person name="Favaro R."/>
            <person name="Immink R.G."/>
            <person name="Ferioli V."/>
            <person name="Bernasconi B."/>
            <person name="Byzova M."/>
            <person name="Angenent G.C."/>
            <person name="Kater M.M."/>
            <person name="Colombo L."/>
        </authorList>
    </citation>
    <scope>INTERACTION WITH MADS13</scope>
    <scope>TISSUE SPECIFICITY</scope>
    <scope>DEVELOPMENTAL STAGE</scope>
</reference>
<reference key="11">
    <citation type="journal article" date="2003" name="Planta">
        <title>Alteration of floral organ identity in rice through ectopic expression of OsMADS16.</title>
        <authorList>
            <person name="Lee S."/>
            <person name="Jeon J.-S."/>
            <person name="An K."/>
            <person name="Moon Y.-H."/>
            <person name="Lee S.-H."/>
            <person name="Chung Y.-Y."/>
            <person name="An G."/>
        </authorList>
    </citation>
    <scope>INTERACTION WITH MADS16</scope>
</reference>
<reference key="12">
    <citation type="journal article" date="2004" name="Plant Physiol.">
        <title>Functional characterization of OsMADS18, a member of the AP1/SQUA subfamily of MADS box genes.</title>
        <authorList>
            <person name="Fornara F."/>
            <person name="Parenicova L."/>
            <person name="Falasca G."/>
            <person name="Pelucchi N."/>
            <person name="Masiero S."/>
            <person name="Ciannamea S."/>
            <person name="Lopez-Dee Z.P."/>
            <person name="Altamura M.M."/>
            <person name="Colombo L."/>
            <person name="Kater M.M."/>
        </authorList>
    </citation>
    <scope>INTERACTION WITH MADS18</scope>
</reference>
<reference key="13">
    <citation type="journal article" date="2009" name="Plant Cell Physiol.">
        <title>Survey of rice proteins interacting with OsFCA and OsFY proteins which are homologous to the Arabidopsis flowering time proteins, FCA and FY.</title>
        <authorList>
            <person name="Jang Y.H."/>
            <person name="Park H.-Y."/>
            <person name="Kim S.-K."/>
            <person name="Lee J.H."/>
            <person name="Suh M.C."/>
            <person name="Chung Y.S."/>
            <person name="Paek K.-H."/>
            <person name="Kim J.-K."/>
        </authorList>
    </citation>
    <scope>INTERACTION WITH FCA</scope>
    <scope>SUBCELLULAR LOCATION</scope>
</reference>
<gene>
    <name type="primary">MADS8</name>
    <name type="synonym">MADS24</name>
    <name type="ordered locus">Os09g0507200</name>
    <name type="ordered locus">LOC_Os09g32948</name>
    <name evidence="8" type="ORF">OsJ_29947</name>
</gene>
<evidence type="ECO:0000255" key="1">
    <source>
        <dbReference type="PROSITE-ProRule" id="PRU00251"/>
    </source>
</evidence>
<evidence type="ECO:0000255" key="2">
    <source>
        <dbReference type="PROSITE-ProRule" id="PRU00629"/>
    </source>
</evidence>
<evidence type="ECO:0000269" key="3">
    <source>
    </source>
</evidence>
<evidence type="ECO:0000269" key="4">
    <source>
    </source>
</evidence>
<evidence type="ECO:0000269" key="5">
    <source>
    </source>
</evidence>
<evidence type="ECO:0000269" key="6">
    <source>
    </source>
</evidence>
<evidence type="ECO:0000269" key="7">
    <source ref="9"/>
</evidence>
<evidence type="ECO:0000312" key="8">
    <source>
        <dbReference type="EMBL" id="EEE70016.1"/>
    </source>
</evidence>
<name>MADS8_ORYSJ</name>
<comment type="function">
    <text evidence="6 7">Probable transcription factor. May be involved in the control of flowering time.</text>
</comment>
<comment type="subunit">
    <text evidence="4">May interact with the K-box of MADS6 and MADS16. May interact with MADS13 and MADS18. Binds to FCA (PubMed:19561057).</text>
</comment>
<comment type="subcellular location">
    <subcellularLocation>
        <location evidence="4">Nucleus</location>
    </subcellularLocation>
</comment>
<comment type="tissue specificity">
    <text evidence="3 5 6">Expressed in lodicules, stamens and carpels.</text>
</comment>
<comment type="developmental stage">
    <text evidence="3 5">Expressed at early stage of flower development in the spikelet (rice flower) primordia and later in stamen and pistil primordia. Expressed during ovule development in the inner and outer integuments.</text>
</comment>
<sequence>MGRGRVELKRIENKINRQVTFAKRRNGLLKKAYELSVLCDAEVALIIFSNRGKLYEFCSGQSMTRTLERYQKFSYGGPDTAIQNKENELVQSSRNEYLKLKARVENLQRTQRNLLGEDLGTLGIKELEQLEKQLDSSLRHIRSTRTQHMLDQLTDLQRREQMLCEANKCLRRKLEESNQLHGQVWEHGATLLGYERQSPHAVQQVPPHGGNGFFHSLEAAAEPTLQIGFTPEQMNNSCVTAFMPTWLP</sequence>
<keyword id="KW-0217">Developmental protein</keyword>
<keyword id="KW-0221">Differentiation</keyword>
<keyword id="KW-0238">DNA-binding</keyword>
<keyword id="KW-0287">Flowering</keyword>
<keyword id="KW-0539">Nucleus</keyword>
<keyword id="KW-1185">Reference proteome</keyword>
<keyword id="KW-0804">Transcription</keyword>
<keyword id="KW-0805">Transcription regulation</keyword>
<protein>
    <recommendedName>
        <fullName>MADS-box transcription factor 8</fullName>
    </recommendedName>
    <alternativeName>
        <fullName>MADS-box protein 24</fullName>
    </alternativeName>
    <alternativeName>
        <fullName>OsMADS24</fullName>
    </alternativeName>
    <alternativeName>
        <fullName>OsMADS8</fullName>
    </alternativeName>
</protein>
<accession>Q9SAR1</accession>
<accession>O03998</accession>
<accession>O04370</accession>
<accession>Q0J0J8</accession>
<feature type="chain" id="PRO_0000229897" description="MADS-box transcription factor 8">
    <location>
        <begin position="1"/>
        <end position="248"/>
    </location>
</feature>
<feature type="domain" description="MADS-box" evidence="1">
    <location>
        <begin position="1"/>
        <end position="61"/>
    </location>
</feature>
<feature type="domain" description="K-box" evidence="2">
    <location>
        <begin position="90"/>
        <end position="180"/>
    </location>
</feature>
<dbReference type="EMBL" id="U78892">
    <property type="protein sequence ID" value="AAC49817.1"/>
    <property type="molecule type" value="mRNA"/>
</dbReference>
<dbReference type="EMBL" id="AC108759">
    <property type="status" value="NOT_ANNOTATED_CDS"/>
    <property type="molecule type" value="Genomic_DNA"/>
</dbReference>
<dbReference type="EMBL" id="AP008215">
    <property type="protein sequence ID" value="BAF25527.1"/>
    <property type="molecule type" value="Genomic_DNA"/>
</dbReference>
<dbReference type="EMBL" id="AP014965">
    <property type="protein sequence ID" value="BAT08872.1"/>
    <property type="molecule type" value="Genomic_DNA"/>
</dbReference>
<dbReference type="EMBL" id="CM000146">
    <property type="protein sequence ID" value="EEE70016.1"/>
    <property type="molecule type" value="Genomic_DNA"/>
</dbReference>
<dbReference type="EMBL" id="AK072867">
    <property type="protein sequence ID" value="BAG93179.1"/>
    <property type="molecule type" value="mRNA"/>
</dbReference>
<dbReference type="EMBL" id="U32109">
    <property type="protein sequence ID" value="AAB53193.1"/>
    <property type="molecule type" value="mRNA"/>
</dbReference>
<dbReference type="PIR" id="T04170">
    <property type="entry name" value="T04170"/>
</dbReference>
<dbReference type="RefSeq" id="XP_015610824.1">
    <property type="nucleotide sequence ID" value="XM_015755338.1"/>
</dbReference>
<dbReference type="SMR" id="Q9SAR1"/>
<dbReference type="FunCoup" id="Q9SAR1">
    <property type="interactions" value="47"/>
</dbReference>
<dbReference type="IntAct" id="Q9SAR1">
    <property type="interactions" value="5"/>
</dbReference>
<dbReference type="STRING" id="39947.Q9SAR1"/>
<dbReference type="PaxDb" id="39947-Q9SAR1"/>
<dbReference type="EnsemblPlants" id="Os09t0507200-01">
    <property type="protein sequence ID" value="Os09t0507200-01"/>
    <property type="gene ID" value="Os09g0507200"/>
</dbReference>
<dbReference type="Gramene" id="Os09t0507200-01">
    <property type="protein sequence ID" value="Os09t0507200-01"/>
    <property type="gene ID" value="Os09g0507200"/>
</dbReference>
<dbReference type="KEGG" id="dosa:Os09g0507200"/>
<dbReference type="eggNOG" id="KOG0014">
    <property type="taxonomic scope" value="Eukaryota"/>
</dbReference>
<dbReference type="HOGENOM" id="CLU_053053_0_2_1"/>
<dbReference type="InParanoid" id="Q9SAR1"/>
<dbReference type="OMA" id="GMIPGWM"/>
<dbReference type="OrthoDB" id="1898716at2759"/>
<dbReference type="Proteomes" id="UP000000763">
    <property type="component" value="Chromosome 9"/>
</dbReference>
<dbReference type="Proteomes" id="UP000007752">
    <property type="component" value="Chromosome 9"/>
</dbReference>
<dbReference type="Proteomes" id="UP000059680">
    <property type="component" value="Chromosome 9"/>
</dbReference>
<dbReference type="GO" id="GO:0005634">
    <property type="term" value="C:nucleus"/>
    <property type="evidence" value="ECO:0000314"/>
    <property type="project" value="UniProtKB"/>
</dbReference>
<dbReference type="GO" id="GO:0000981">
    <property type="term" value="F:DNA-binding transcription factor activity, RNA polymerase II-specific"/>
    <property type="evidence" value="ECO:0000318"/>
    <property type="project" value="GO_Central"/>
</dbReference>
<dbReference type="GO" id="GO:0046983">
    <property type="term" value="F:protein dimerization activity"/>
    <property type="evidence" value="ECO:0007669"/>
    <property type="project" value="InterPro"/>
</dbReference>
<dbReference type="GO" id="GO:0000978">
    <property type="term" value="F:RNA polymerase II cis-regulatory region sequence-specific DNA binding"/>
    <property type="evidence" value="ECO:0000318"/>
    <property type="project" value="GO_Central"/>
</dbReference>
<dbReference type="GO" id="GO:0030154">
    <property type="term" value="P:cell differentiation"/>
    <property type="evidence" value="ECO:0007669"/>
    <property type="project" value="UniProtKB-KW"/>
</dbReference>
<dbReference type="GO" id="GO:0009908">
    <property type="term" value="P:flower development"/>
    <property type="evidence" value="ECO:0007669"/>
    <property type="project" value="UniProtKB-KW"/>
</dbReference>
<dbReference type="GO" id="GO:0045944">
    <property type="term" value="P:positive regulation of transcription by RNA polymerase II"/>
    <property type="evidence" value="ECO:0007669"/>
    <property type="project" value="InterPro"/>
</dbReference>
<dbReference type="GO" id="GO:0006357">
    <property type="term" value="P:regulation of transcription by RNA polymerase II"/>
    <property type="evidence" value="ECO:0000318"/>
    <property type="project" value="GO_Central"/>
</dbReference>
<dbReference type="CDD" id="cd00265">
    <property type="entry name" value="MADS_MEF2_like"/>
    <property type="match status" value="1"/>
</dbReference>
<dbReference type="FunFam" id="3.40.1810.10:FF:000011">
    <property type="entry name" value="MADS-box transcription factor 7"/>
    <property type="match status" value="1"/>
</dbReference>
<dbReference type="Gene3D" id="3.40.1810.10">
    <property type="entry name" value="Transcription factor, MADS-box"/>
    <property type="match status" value="1"/>
</dbReference>
<dbReference type="InterPro" id="IPR050142">
    <property type="entry name" value="MADS-box/MEF2_TF"/>
</dbReference>
<dbReference type="InterPro" id="IPR033896">
    <property type="entry name" value="MEF2-like_N"/>
</dbReference>
<dbReference type="InterPro" id="IPR002487">
    <property type="entry name" value="TF_Kbox"/>
</dbReference>
<dbReference type="InterPro" id="IPR002100">
    <property type="entry name" value="TF_MADSbox"/>
</dbReference>
<dbReference type="InterPro" id="IPR036879">
    <property type="entry name" value="TF_MADSbox_sf"/>
</dbReference>
<dbReference type="PANTHER" id="PTHR48019">
    <property type="entry name" value="SERUM RESPONSE FACTOR HOMOLOG"/>
    <property type="match status" value="1"/>
</dbReference>
<dbReference type="Pfam" id="PF01486">
    <property type="entry name" value="K-box"/>
    <property type="match status" value="1"/>
</dbReference>
<dbReference type="Pfam" id="PF00319">
    <property type="entry name" value="SRF-TF"/>
    <property type="match status" value="1"/>
</dbReference>
<dbReference type="PRINTS" id="PR00404">
    <property type="entry name" value="MADSDOMAIN"/>
</dbReference>
<dbReference type="SMART" id="SM00432">
    <property type="entry name" value="MADS"/>
    <property type="match status" value="1"/>
</dbReference>
<dbReference type="SUPFAM" id="SSF55455">
    <property type="entry name" value="SRF-like"/>
    <property type="match status" value="1"/>
</dbReference>
<dbReference type="PROSITE" id="PS51297">
    <property type="entry name" value="K_BOX"/>
    <property type="match status" value="1"/>
</dbReference>
<dbReference type="PROSITE" id="PS00350">
    <property type="entry name" value="MADS_BOX_1"/>
    <property type="match status" value="1"/>
</dbReference>
<dbReference type="PROSITE" id="PS50066">
    <property type="entry name" value="MADS_BOX_2"/>
    <property type="match status" value="1"/>
</dbReference>